<accession>Q4A5J1</accession>
<name>RL17_MYCS5</name>
<keyword id="KW-1185">Reference proteome</keyword>
<keyword id="KW-0687">Ribonucleoprotein</keyword>
<keyword id="KW-0689">Ribosomal protein</keyword>
<gene>
    <name evidence="1" type="primary">rplQ</name>
    <name type="ordered locus">MS53_0573</name>
</gene>
<organism>
    <name type="scientific">Mycoplasmopsis synoviae (strain 53)</name>
    <name type="common">Mycoplasma synoviae</name>
    <dbReference type="NCBI Taxonomy" id="262723"/>
    <lineage>
        <taxon>Bacteria</taxon>
        <taxon>Bacillati</taxon>
        <taxon>Mycoplasmatota</taxon>
        <taxon>Mycoplasmoidales</taxon>
        <taxon>Metamycoplasmataceae</taxon>
        <taxon>Mycoplasmopsis</taxon>
    </lineage>
</organism>
<comment type="subunit">
    <text evidence="1">Part of the 50S ribosomal subunit. Contacts protein L32.</text>
</comment>
<comment type="similarity">
    <text evidence="1">Belongs to the bacterial ribosomal protein bL17 family.</text>
</comment>
<dbReference type="EMBL" id="AE017245">
    <property type="protein sequence ID" value="AAZ43980.1"/>
    <property type="molecule type" value="Genomic_DNA"/>
</dbReference>
<dbReference type="RefSeq" id="WP_011283709.1">
    <property type="nucleotide sequence ID" value="NC_007294.1"/>
</dbReference>
<dbReference type="SMR" id="Q4A5J1"/>
<dbReference type="STRING" id="262723.MS53_0573"/>
<dbReference type="KEGG" id="msy:MS53_0573"/>
<dbReference type="eggNOG" id="COG0203">
    <property type="taxonomic scope" value="Bacteria"/>
</dbReference>
<dbReference type="HOGENOM" id="CLU_074407_2_2_14"/>
<dbReference type="OrthoDB" id="9809073at2"/>
<dbReference type="Proteomes" id="UP000000549">
    <property type="component" value="Chromosome"/>
</dbReference>
<dbReference type="GO" id="GO:0022625">
    <property type="term" value="C:cytosolic large ribosomal subunit"/>
    <property type="evidence" value="ECO:0007669"/>
    <property type="project" value="TreeGrafter"/>
</dbReference>
<dbReference type="GO" id="GO:0003735">
    <property type="term" value="F:structural constituent of ribosome"/>
    <property type="evidence" value="ECO:0007669"/>
    <property type="project" value="InterPro"/>
</dbReference>
<dbReference type="GO" id="GO:0006412">
    <property type="term" value="P:translation"/>
    <property type="evidence" value="ECO:0007669"/>
    <property type="project" value="UniProtKB-UniRule"/>
</dbReference>
<dbReference type="Gene3D" id="3.90.1030.10">
    <property type="entry name" value="Ribosomal protein L17"/>
    <property type="match status" value="1"/>
</dbReference>
<dbReference type="HAMAP" id="MF_01368">
    <property type="entry name" value="Ribosomal_bL17"/>
    <property type="match status" value="1"/>
</dbReference>
<dbReference type="InterPro" id="IPR000456">
    <property type="entry name" value="Ribosomal_bL17"/>
</dbReference>
<dbReference type="InterPro" id="IPR047859">
    <property type="entry name" value="Ribosomal_bL17_CS"/>
</dbReference>
<dbReference type="InterPro" id="IPR036373">
    <property type="entry name" value="Ribosomal_bL17_sf"/>
</dbReference>
<dbReference type="NCBIfam" id="TIGR00059">
    <property type="entry name" value="L17"/>
    <property type="match status" value="1"/>
</dbReference>
<dbReference type="PANTHER" id="PTHR14413:SF16">
    <property type="entry name" value="LARGE RIBOSOMAL SUBUNIT PROTEIN BL17M"/>
    <property type="match status" value="1"/>
</dbReference>
<dbReference type="PANTHER" id="PTHR14413">
    <property type="entry name" value="RIBOSOMAL PROTEIN L17"/>
    <property type="match status" value="1"/>
</dbReference>
<dbReference type="Pfam" id="PF01196">
    <property type="entry name" value="Ribosomal_L17"/>
    <property type="match status" value="1"/>
</dbReference>
<dbReference type="SUPFAM" id="SSF64263">
    <property type="entry name" value="Prokaryotic ribosomal protein L17"/>
    <property type="match status" value="1"/>
</dbReference>
<dbReference type="PROSITE" id="PS01167">
    <property type="entry name" value="RIBOSOMAL_L17"/>
    <property type="match status" value="1"/>
</dbReference>
<protein>
    <recommendedName>
        <fullName evidence="1">Large ribosomal subunit protein bL17</fullName>
    </recommendedName>
    <alternativeName>
        <fullName evidence="2">50S ribosomal protein L17</fullName>
    </alternativeName>
</protein>
<evidence type="ECO:0000255" key="1">
    <source>
        <dbReference type="HAMAP-Rule" id="MF_01368"/>
    </source>
</evidence>
<evidence type="ECO:0000305" key="2"/>
<feature type="chain" id="PRO_1000055882" description="Large ribosomal subunit protein bL17">
    <location>
        <begin position="1"/>
        <end position="120"/>
    </location>
</feature>
<proteinExistence type="inferred from homology"/>
<reference key="1">
    <citation type="journal article" date="2005" name="J. Bacteriol.">
        <title>Swine and poultry pathogens: the complete genome sequences of two strains of Mycoplasma hyopneumoniae and a strain of Mycoplasma synoviae.</title>
        <authorList>
            <person name="Vasconcelos A.T.R."/>
            <person name="Ferreira H.B."/>
            <person name="Bizarro C.V."/>
            <person name="Bonatto S.L."/>
            <person name="Carvalho M.O."/>
            <person name="Pinto P.M."/>
            <person name="Almeida D.F."/>
            <person name="Almeida L.G.P."/>
            <person name="Almeida R."/>
            <person name="Alves-Junior L."/>
            <person name="Assuncao E.N."/>
            <person name="Azevedo V.A.C."/>
            <person name="Bogo M.R."/>
            <person name="Brigido M.M."/>
            <person name="Brocchi M."/>
            <person name="Burity H.A."/>
            <person name="Camargo A.A."/>
            <person name="Camargo S.S."/>
            <person name="Carepo M.S."/>
            <person name="Carraro D.M."/>
            <person name="de Mattos Cascardo J.C."/>
            <person name="Castro L.A."/>
            <person name="Cavalcanti G."/>
            <person name="Chemale G."/>
            <person name="Collevatti R.G."/>
            <person name="Cunha C.W."/>
            <person name="Dallagiovanna B."/>
            <person name="Dambros B.P."/>
            <person name="Dellagostin O.A."/>
            <person name="Falcao C."/>
            <person name="Fantinatti-Garboggini F."/>
            <person name="Felipe M.S.S."/>
            <person name="Fiorentin L."/>
            <person name="Franco G.R."/>
            <person name="Freitas N.S.A."/>
            <person name="Frias D."/>
            <person name="Grangeiro T.B."/>
            <person name="Grisard E.C."/>
            <person name="Guimaraes C.T."/>
            <person name="Hungria M."/>
            <person name="Jardim S.N."/>
            <person name="Krieger M.A."/>
            <person name="Laurino J.P."/>
            <person name="Lima L.F.A."/>
            <person name="Lopes M.I."/>
            <person name="Loreto E.L.S."/>
            <person name="Madeira H.M.F."/>
            <person name="Manfio G.P."/>
            <person name="Maranhao A.Q."/>
            <person name="Martinkovics C.T."/>
            <person name="Medeiros S.R.B."/>
            <person name="Moreira M.A.M."/>
            <person name="Neiva M."/>
            <person name="Ramalho-Neto C.E."/>
            <person name="Nicolas M.F."/>
            <person name="Oliveira S.C."/>
            <person name="Paixao R.F.C."/>
            <person name="Pedrosa F.O."/>
            <person name="Pena S.D.J."/>
            <person name="Pereira M."/>
            <person name="Pereira-Ferrari L."/>
            <person name="Piffer I."/>
            <person name="Pinto L.S."/>
            <person name="Potrich D.P."/>
            <person name="Salim A.C.M."/>
            <person name="Santos F.R."/>
            <person name="Schmitt R."/>
            <person name="Schneider M.P.C."/>
            <person name="Schrank A."/>
            <person name="Schrank I.S."/>
            <person name="Schuck A.F."/>
            <person name="Seuanez H.N."/>
            <person name="Silva D.W."/>
            <person name="Silva R."/>
            <person name="Silva S.C."/>
            <person name="Soares C.M.A."/>
            <person name="Souza K.R.L."/>
            <person name="Souza R.C."/>
            <person name="Staats C.C."/>
            <person name="Steffens M.B.R."/>
            <person name="Teixeira S.M.R."/>
            <person name="Urmenyi T.P."/>
            <person name="Vainstein M.H."/>
            <person name="Zuccherato L.W."/>
            <person name="Simpson A.J.G."/>
            <person name="Zaha A."/>
        </authorList>
    </citation>
    <scope>NUCLEOTIDE SEQUENCE [LARGE SCALE GENOMIC DNA]</scope>
    <source>
        <strain>53</strain>
    </source>
</reference>
<sequence>MANPTQIYSRDSKWRRGVMRSLVSELLLHGRIQTTLTRAKEVRGHAEKLITKAKAQSLASRRHAASFLRPLVTKDNKTLLQELFDTIAPKYKDRPGGYTRIYKLPKRDGDSTRMALIELV</sequence>